<keyword id="KW-0051">Antiviral defense</keyword>
<keyword id="KW-0238">DNA-binding</keyword>
<keyword id="KW-1185">Reference proteome</keyword>
<evidence type="ECO:0000250" key="1"/>
<evidence type="ECO:0000269" key="2">
    <source>
    </source>
</evidence>
<evidence type="ECO:0000305" key="3"/>
<sequence length="204" mass="22202">MRMGITVGFEHRFAVRALAKLGPADEYIFLYAYTGRDEDSRSESTVRELIAAFGRGAGFRVDLTKPSEALEQIYGLGLERVVLAGGPRLLVLLALLASLLRRSEVYVLPEYSAEPLDLTPLTALCDLCRLSPAKLGIVASVSGRVGIDDVAQLVGRDSTTVARYLKDLSEAGIVKSLGGRRREYFVDPLLTTVARLMQNRAGSL</sequence>
<organism>
    <name type="scientific">Thermoproteus tenax (strain ATCC 35583 / DSM 2078 / JCM 9277 / NBRC 100435 / Kra 1)</name>
    <dbReference type="NCBI Taxonomy" id="768679"/>
    <lineage>
        <taxon>Archaea</taxon>
        <taxon>Thermoproteota</taxon>
        <taxon>Thermoprotei</taxon>
        <taxon>Thermoproteales</taxon>
        <taxon>Thermoproteaceae</taxon>
        <taxon>Thermoproteus</taxon>
    </lineage>
</organism>
<accession>G4RJY9</accession>
<gene>
    <name type="primary">csa3</name>
    <name type="ordered locus">TTX_1249</name>
</gene>
<feature type="chain" id="PRO_0000422233" description="CRISPR locus-related putative DNA-binding protein Csa3">
    <location>
        <begin position="1"/>
        <end position="204"/>
    </location>
</feature>
<name>CSA3_THETK</name>
<comment type="function">
    <text evidence="1">CRISPR (clustered regularly interspaced short palindromic repeat) is an adaptive immune system that provides protection against mobile genetic elements (viruses, transposable elements and conjugative plasmids). CRISPR clusters contain spacers, sequences complementary to antecedent mobile elements, and target invading nucleic acids. CRISPR clusters are transcribed and processed into CRISPR RNA (crRNA) (By similarity). A putative DNA-binding protein it may regulate either or both of the Cas protein operons encoded on either side of it.</text>
</comment>
<comment type="induction">
    <text evidence="2">Not significantly induced by ultraviolet light or by NaCl. A monocistronic operon.</text>
</comment>
<comment type="similarity">
    <text evidence="3">Belongs to the CRISPR-associated Csa3 family.</text>
</comment>
<protein>
    <recommendedName>
        <fullName>CRISPR locus-related putative DNA-binding protein Csa3</fullName>
    </recommendedName>
</protein>
<proteinExistence type="evidence at transcript level"/>
<dbReference type="EMBL" id="FN869859">
    <property type="protein sequence ID" value="CCC81884.1"/>
    <property type="molecule type" value="Genomic_DNA"/>
</dbReference>
<dbReference type="RefSeq" id="WP_014127139.1">
    <property type="nucleotide sequence ID" value="NC_016070.1"/>
</dbReference>
<dbReference type="SMR" id="G4RJY9"/>
<dbReference type="STRING" id="768679.TTX_1249"/>
<dbReference type="PaxDb" id="768679-TTX_1249"/>
<dbReference type="GeneID" id="11262129"/>
<dbReference type="KEGG" id="ttn:TTX_1249"/>
<dbReference type="PATRIC" id="fig|768679.9.peg.1262"/>
<dbReference type="eggNOG" id="arCOG01451">
    <property type="taxonomic scope" value="Archaea"/>
</dbReference>
<dbReference type="HOGENOM" id="CLU_1292074_0_0_2"/>
<dbReference type="OrthoDB" id="26061at2157"/>
<dbReference type="Proteomes" id="UP000002654">
    <property type="component" value="Chromosome"/>
</dbReference>
<dbReference type="GO" id="GO:0003677">
    <property type="term" value="F:DNA binding"/>
    <property type="evidence" value="ECO:0007669"/>
    <property type="project" value="UniProtKB-KW"/>
</dbReference>
<dbReference type="GO" id="GO:0051607">
    <property type="term" value="P:defense response to virus"/>
    <property type="evidence" value="ECO:0007669"/>
    <property type="project" value="UniProtKB-KW"/>
</dbReference>
<dbReference type="Gene3D" id="3.40.50.11700">
    <property type="match status" value="1"/>
</dbReference>
<dbReference type="Gene3D" id="1.10.10.10">
    <property type="entry name" value="Winged helix-like DNA-binding domain superfamily/Winged helix DNA-binding domain"/>
    <property type="match status" value="1"/>
</dbReference>
<dbReference type="InterPro" id="IPR010163">
    <property type="entry name" value="Csa3"/>
</dbReference>
<dbReference type="InterPro" id="IPR036388">
    <property type="entry name" value="WH-like_DNA-bd_sf"/>
</dbReference>
<dbReference type="InterPro" id="IPR036390">
    <property type="entry name" value="WH_DNA-bd_sf"/>
</dbReference>
<dbReference type="NCBIfam" id="TIGR01884">
    <property type="entry name" value="cas_HTH"/>
    <property type="match status" value="1"/>
</dbReference>
<dbReference type="SUPFAM" id="SSF46785">
    <property type="entry name" value="Winged helix' DNA-binding domain"/>
    <property type="match status" value="1"/>
</dbReference>
<reference key="1">
    <citation type="journal article" date="2011" name="PLoS ONE">
        <title>The complete genome sequence of Thermoproteus tenax: a physiologically versatile member of the Crenarchaeota.</title>
        <authorList>
            <person name="Siebers B."/>
            <person name="Zaparty M."/>
            <person name="Raddatz G."/>
            <person name="Tjaden B."/>
            <person name="Albers S.V."/>
            <person name="Bell S.D."/>
            <person name="Blombach F."/>
            <person name="Kletzin A."/>
            <person name="Kyrpides N."/>
            <person name="Lanz C."/>
            <person name="Plagens A."/>
            <person name="Rampp M."/>
            <person name="Rosinus A."/>
            <person name="von Jan M."/>
            <person name="Makarova K.S."/>
            <person name="Klenk H.P."/>
            <person name="Schuster S.C."/>
            <person name="Hensel R."/>
        </authorList>
    </citation>
    <scope>NUCLEOTIDE SEQUENCE [LARGE SCALE GENOMIC DNA]</scope>
    <source>
        <strain>ATCC 35583 / DSM 2078 / JCM 9277 / NBRC 100435 / Kra 1</strain>
    </source>
</reference>
<reference key="2">
    <citation type="journal article" date="2012" name="J. Bacteriol.">
        <title>Characterization of the CRISPR/Cas subtype I-A system of the hyperthermophilic crenarchaeon Thermoproteus tenax.</title>
        <authorList>
            <person name="Plagens A."/>
            <person name="Tjaden B."/>
            <person name="Hagemann A."/>
            <person name="Randau L."/>
            <person name="Hensel R."/>
        </authorList>
    </citation>
    <scope>INDUCTION</scope>
    <scope>OPERON STRUCTURE</scope>
    <source>
        <strain>ATCC 35583 / DSM 2078 / JCM 9277 / NBRC 100435 / Kra 1</strain>
    </source>
</reference>